<organism>
    <name type="scientific">Chromohalobacter salexigens (strain ATCC BAA-138 / DSM 3043 / CIP 106854 / NCIMB 13768 / 1H11)</name>
    <dbReference type="NCBI Taxonomy" id="290398"/>
    <lineage>
        <taxon>Bacteria</taxon>
        <taxon>Pseudomonadati</taxon>
        <taxon>Pseudomonadota</taxon>
        <taxon>Gammaproteobacteria</taxon>
        <taxon>Oceanospirillales</taxon>
        <taxon>Halomonadaceae</taxon>
        <taxon>Chromohalobacter</taxon>
    </lineage>
</organism>
<keyword id="KW-0067">ATP-binding</keyword>
<keyword id="KW-0315">Glutamine amidotransferase</keyword>
<keyword id="KW-0436">Ligase</keyword>
<keyword id="KW-0460">Magnesium</keyword>
<keyword id="KW-0479">Metal-binding</keyword>
<keyword id="KW-0547">Nucleotide-binding</keyword>
<keyword id="KW-0665">Pyrimidine biosynthesis</keyword>
<keyword id="KW-1185">Reference proteome</keyword>
<protein>
    <recommendedName>
        <fullName evidence="1">CTP synthase</fullName>
        <ecNumber evidence="1">6.3.4.2</ecNumber>
    </recommendedName>
    <alternativeName>
        <fullName evidence="1">Cytidine 5'-triphosphate synthase</fullName>
    </alternativeName>
    <alternativeName>
        <fullName evidence="1">Cytidine triphosphate synthetase</fullName>
        <shortName evidence="1">CTP synthetase</shortName>
        <shortName evidence="1">CTPS</shortName>
    </alternativeName>
    <alternativeName>
        <fullName evidence="1">UTP--ammonia ligase</fullName>
    </alternativeName>
</protein>
<dbReference type="EC" id="6.3.4.2" evidence="1"/>
<dbReference type="EMBL" id="CP000285">
    <property type="protein sequence ID" value="ABE57979.1"/>
    <property type="molecule type" value="Genomic_DNA"/>
</dbReference>
<dbReference type="RefSeq" id="WP_011505925.1">
    <property type="nucleotide sequence ID" value="NC_007963.1"/>
</dbReference>
<dbReference type="SMR" id="Q1QZX9"/>
<dbReference type="STRING" id="290398.Csal_0617"/>
<dbReference type="MEROPS" id="C26.964"/>
<dbReference type="GeneID" id="95333372"/>
<dbReference type="KEGG" id="csa:Csal_0617"/>
<dbReference type="eggNOG" id="COG0504">
    <property type="taxonomic scope" value="Bacteria"/>
</dbReference>
<dbReference type="HOGENOM" id="CLU_011675_5_0_6"/>
<dbReference type="OrthoDB" id="9801107at2"/>
<dbReference type="UniPathway" id="UPA00159">
    <property type="reaction ID" value="UER00277"/>
</dbReference>
<dbReference type="Proteomes" id="UP000000239">
    <property type="component" value="Chromosome"/>
</dbReference>
<dbReference type="GO" id="GO:0005829">
    <property type="term" value="C:cytosol"/>
    <property type="evidence" value="ECO:0007669"/>
    <property type="project" value="TreeGrafter"/>
</dbReference>
<dbReference type="GO" id="GO:0005524">
    <property type="term" value="F:ATP binding"/>
    <property type="evidence" value="ECO:0007669"/>
    <property type="project" value="UniProtKB-KW"/>
</dbReference>
<dbReference type="GO" id="GO:0003883">
    <property type="term" value="F:CTP synthase activity"/>
    <property type="evidence" value="ECO:0007669"/>
    <property type="project" value="UniProtKB-UniRule"/>
</dbReference>
<dbReference type="GO" id="GO:0004359">
    <property type="term" value="F:glutaminase activity"/>
    <property type="evidence" value="ECO:0007669"/>
    <property type="project" value="RHEA"/>
</dbReference>
<dbReference type="GO" id="GO:0042802">
    <property type="term" value="F:identical protein binding"/>
    <property type="evidence" value="ECO:0007669"/>
    <property type="project" value="TreeGrafter"/>
</dbReference>
<dbReference type="GO" id="GO:0046872">
    <property type="term" value="F:metal ion binding"/>
    <property type="evidence" value="ECO:0007669"/>
    <property type="project" value="UniProtKB-KW"/>
</dbReference>
<dbReference type="GO" id="GO:0044210">
    <property type="term" value="P:'de novo' CTP biosynthetic process"/>
    <property type="evidence" value="ECO:0007669"/>
    <property type="project" value="UniProtKB-UniRule"/>
</dbReference>
<dbReference type="GO" id="GO:0019856">
    <property type="term" value="P:pyrimidine nucleobase biosynthetic process"/>
    <property type="evidence" value="ECO:0007669"/>
    <property type="project" value="TreeGrafter"/>
</dbReference>
<dbReference type="CDD" id="cd03113">
    <property type="entry name" value="CTPS_N"/>
    <property type="match status" value="1"/>
</dbReference>
<dbReference type="CDD" id="cd01746">
    <property type="entry name" value="GATase1_CTP_Synthase"/>
    <property type="match status" value="1"/>
</dbReference>
<dbReference type="FunFam" id="3.40.50.300:FF:000009">
    <property type="entry name" value="CTP synthase"/>
    <property type="match status" value="1"/>
</dbReference>
<dbReference type="FunFam" id="3.40.50.880:FF:000002">
    <property type="entry name" value="CTP synthase"/>
    <property type="match status" value="1"/>
</dbReference>
<dbReference type="Gene3D" id="3.40.50.880">
    <property type="match status" value="1"/>
</dbReference>
<dbReference type="Gene3D" id="3.40.50.300">
    <property type="entry name" value="P-loop containing nucleotide triphosphate hydrolases"/>
    <property type="match status" value="1"/>
</dbReference>
<dbReference type="HAMAP" id="MF_01227">
    <property type="entry name" value="PyrG"/>
    <property type="match status" value="1"/>
</dbReference>
<dbReference type="InterPro" id="IPR029062">
    <property type="entry name" value="Class_I_gatase-like"/>
</dbReference>
<dbReference type="InterPro" id="IPR004468">
    <property type="entry name" value="CTP_synthase"/>
</dbReference>
<dbReference type="InterPro" id="IPR017456">
    <property type="entry name" value="CTP_synthase_N"/>
</dbReference>
<dbReference type="InterPro" id="IPR017926">
    <property type="entry name" value="GATASE"/>
</dbReference>
<dbReference type="InterPro" id="IPR033828">
    <property type="entry name" value="GATase1_CTP_Synthase"/>
</dbReference>
<dbReference type="InterPro" id="IPR027417">
    <property type="entry name" value="P-loop_NTPase"/>
</dbReference>
<dbReference type="NCBIfam" id="NF003792">
    <property type="entry name" value="PRK05380.1"/>
    <property type="match status" value="1"/>
</dbReference>
<dbReference type="NCBIfam" id="TIGR00337">
    <property type="entry name" value="PyrG"/>
    <property type="match status" value="1"/>
</dbReference>
<dbReference type="PANTHER" id="PTHR11550">
    <property type="entry name" value="CTP SYNTHASE"/>
    <property type="match status" value="1"/>
</dbReference>
<dbReference type="PANTHER" id="PTHR11550:SF0">
    <property type="entry name" value="CTP SYNTHASE-RELATED"/>
    <property type="match status" value="1"/>
</dbReference>
<dbReference type="Pfam" id="PF06418">
    <property type="entry name" value="CTP_synth_N"/>
    <property type="match status" value="1"/>
</dbReference>
<dbReference type="Pfam" id="PF00117">
    <property type="entry name" value="GATase"/>
    <property type="match status" value="1"/>
</dbReference>
<dbReference type="SUPFAM" id="SSF52317">
    <property type="entry name" value="Class I glutamine amidotransferase-like"/>
    <property type="match status" value="1"/>
</dbReference>
<dbReference type="SUPFAM" id="SSF52540">
    <property type="entry name" value="P-loop containing nucleoside triphosphate hydrolases"/>
    <property type="match status" value="1"/>
</dbReference>
<dbReference type="PROSITE" id="PS51273">
    <property type="entry name" value="GATASE_TYPE_1"/>
    <property type="match status" value="1"/>
</dbReference>
<gene>
    <name evidence="1" type="primary">pyrG</name>
    <name type="ordered locus">Csal_0617</name>
</gene>
<evidence type="ECO:0000255" key="1">
    <source>
        <dbReference type="HAMAP-Rule" id="MF_01227"/>
    </source>
</evidence>
<name>PYRG_CHRSD</name>
<reference key="1">
    <citation type="journal article" date="2011" name="Stand. Genomic Sci.">
        <title>Complete genome sequence of the halophilic and highly halotolerant Chromohalobacter salexigens type strain (1H11(T)).</title>
        <authorList>
            <person name="Copeland A."/>
            <person name="O'Connor K."/>
            <person name="Lucas S."/>
            <person name="Lapidus A."/>
            <person name="Berry K.W."/>
            <person name="Detter J.C."/>
            <person name="Del Rio T.G."/>
            <person name="Hammon N."/>
            <person name="Dalin E."/>
            <person name="Tice H."/>
            <person name="Pitluck S."/>
            <person name="Bruce D."/>
            <person name="Goodwin L."/>
            <person name="Han C."/>
            <person name="Tapia R."/>
            <person name="Saunders E."/>
            <person name="Schmutz J."/>
            <person name="Brettin T."/>
            <person name="Larimer F."/>
            <person name="Land M."/>
            <person name="Hauser L."/>
            <person name="Vargas C."/>
            <person name="Nieto J.J."/>
            <person name="Kyrpides N.C."/>
            <person name="Ivanova N."/>
            <person name="Goker M."/>
            <person name="Klenk H.P."/>
            <person name="Csonka L.N."/>
            <person name="Woyke T."/>
        </authorList>
    </citation>
    <scope>NUCLEOTIDE SEQUENCE [LARGE SCALE GENOMIC DNA]</scope>
    <source>
        <strain>ATCC BAA-138 / DSM 3043 / CIP 106854 / NCIMB 13768 / 1H11</strain>
    </source>
</reference>
<comment type="function">
    <text evidence="1">Catalyzes the ATP-dependent amination of UTP to CTP with either L-glutamine or ammonia as the source of nitrogen. Regulates intracellular CTP levels through interactions with the four ribonucleotide triphosphates.</text>
</comment>
<comment type="catalytic activity">
    <reaction evidence="1">
        <text>UTP + L-glutamine + ATP + H2O = CTP + L-glutamate + ADP + phosphate + 2 H(+)</text>
        <dbReference type="Rhea" id="RHEA:26426"/>
        <dbReference type="ChEBI" id="CHEBI:15377"/>
        <dbReference type="ChEBI" id="CHEBI:15378"/>
        <dbReference type="ChEBI" id="CHEBI:29985"/>
        <dbReference type="ChEBI" id="CHEBI:30616"/>
        <dbReference type="ChEBI" id="CHEBI:37563"/>
        <dbReference type="ChEBI" id="CHEBI:43474"/>
        <dbReference type="ChEBI" id="CHEBI:46398"/>
        <dbReference type="ChEBI" id="CHEBI:58359"/>
        <dbReference type="ChEBI" id="CHEBI:456216"/>
        <dbReference type="EC" id="6.3.4.2"/>
    </reaction>
</comment>
<comment type="catalytic activity">
    <reaction evidence="1">
        <text>L-glutamine + H2O = L-glutamate + NH4(+)</text>
        <dbReference type="Rhea" id="RHEA:15889"/>
        <dbReference type="ChEBI" id="CHEBI:15377"/>
        <dbReference type="ChEBI" id="CHEBI:28938"/>
        <dbReference type="ChEBI" id="CHEBI:29985"/>
        <dbReference type="ChEBI" id="CHEBI:58359"/>
    </reaction>
</comment>
<comment type="catalytic activity">
    <reaction evidence="1">
        <text>UTP + NH4(+) + ATP = CTP + ADP + phosphate + 2 H(+)</text>
        <dbReference type="Rhea" id="RHEA:16597"/>
        <dbReference type="ChEBI" id="CHEBI:15378"/>
        <dbReference type="ChEBI" id="CHEBI:28938"/>
        <dbReference type="ChEBI" id="CHEBI:30616"/>
        <dbReference type="ChEBI" id="CHEBI:37563"/>
        <dbReference type="ChEBI" id="CHEBI:43474"/>
        <dbReference type="ChEBI" id="CHEBI:46398"/>
        <dbReference type="ChEBI" id="CHEBI:456216"/>
    </reaction>
</comment>
<comment type="activity regulation">
    <text evidence="1">Allosterically activated by GTP, when glutamine is the substrate; GTP has no effect on the reaction when ammonia is the substrate. The allosteric effector GTP functions by stabilizing the protein conformation that binds the tetrahedral intermediate(s) formed during glutamine hydrolysis. Inhibited by the product CTP, via allosteric rather than competitive inhibition.</text>
</comment>
<comment type="pathway">
    <text evidence="1">Pyrimidine metabolism; CTP biosynthesis via de novo pathway; CTP from UDP: step 2/2.</text>
</comment>
<comment type="subunit">
    <text evidence="1">Homotetramer.</text>
</comment>
<comment type="miscellaneous">
    <text evidence="1">CTPSs have evolved a hybrid strategy for distinguishing between UTP and CTP. The overlapping regions of the product feedback inhibitory and substrate sites recognize a common feature in both compounds, the triphosphate moiety. To differentiate isosteric substrate and product pyrimidine rings, an additional pocket far from the expected kinase/ligase catalytic site, specifically recognizes the cytosine and ribose portions of the product inhibitor.</text>
</comment>
<comment type="similarity">
    <text evidence="1">Belongs to the CTP synthase family.</text>
</comment>
<proteinExistence type="inferred from homology"/>
<accession>Q1QZX9</accession>
<feature type="chain" id="PRO_0000266095" description="CTP synthase">
    <location>
        <begin position="1"/>
        <end position="548"/>
    </location>
</feature>
<feature type="domain" description="Glutamine amidotransferase type-1" evidence="1">
    <location>
        <begin position="290"/>
        <end position="541"/>
    </location>
</feature>
<feature type="region of interest" description="Amidoligase domain" evidence="1">
    <location>
        <begin position="1"/>
        <end position="265"/>
    </location>
</feature>
<feature type="active site" description="Nucleophile; for glutamine hydrolysis" evidence="1">
    <location>
        <position position="378"/>
    </location>
</feature>
<feature type="active site" evidence="1">
    <location>
        <position position="514"/>
    </location>
</feature>
<feature type="active site" evidence="1">
    <location>
        <position position="516"/>
    </location>
</feature>
<feature type="binding site" evidence="1">
    <location>
        <position position="13"/>
    </location>
    <ligand>
        <name>CTP</name>
        <dbReference type="ChEBI" id="CHEBI:37563"/>
        <note>allosteric inhibitor</note>
    </ligand>
</feature>
<feature type="binding site" evidence="1">
    <location>
        <position position="13"/>
    </location>
    <ligand>
        <name>UTP</name>
        <dbReference type="ChEBI" id="CHEBI:46398"/>
    </ligand>
</feature>
<feature type="binding site" evidence="1">
    <location>
        <begin position="14"/>
        <end position="19"/>
    </location>
    <ligand>
        <name>ATP</name>
        <dbReference type="ChEBI" id="CHEBI:30616"/>
    </ligand>
</feature>
<feature type="binding site" evidence="1">
    <location>
        <position position="71"/>
    </location>
    <ligand>
        <name>ATP</name>
        <dbReference type="ChEBI" id="CHEBI:30616"/>
    </ligand>
</feature>
<feature type="binding site" evidence="1">
    <location>
        <position position="71"/>
    </location>
    <ligand>
        <name>Mg(2+)</name>
        <dbReference type="ChEBI" id="CHEBI:18420"/>
    </ligand>
</feature>
<feature type="binding site" evidence="1">
    <location>
        <position position="139"/>
    </location>
    <ligand>
        <name>Mg(2+)</name>
        <dbReference type="ChEBI" id="CHEBI:18420"/>
    </ligand>
</feature>
<feature type="binding site" evidence="1">
    <location>
        <begin position="146"/>
        <end position="148"/>
    </location>
    <ligand>
        <name>CTP</name>
        <dbReference type="ChEBI" id="CHEBI:37563"/>
        <note>allosteric inhibitor</note>
    </ligand>
</feature>
<feature type="binding site" evidence="1">
    <location>
        <begin position="186"/>
        <end position="191"/>
    </location>
    <ligand>
        <name>CTP</name>
        <dbReference type="ChEBI" id="CHEBI:37563"/>
        <note>allosteric inhibitor</note>
    </ligand>
</feature>
<feature type="binding site" evidence="1">
    <location>
        <begin position="186"/>
        <end position="191"/>
    </location>
    <ligand>
        <name>UTP</name>
        <dbReference type="ChEBI" id="CHEBI:46398"/>
    </ligand>
</feature>
<feature type="binding site" evidence="1">
    <location>
        <position position="222"/>
    </location>
    <ligand>
        <name>CTP</name>
        <dbReference type="ChEBI" id="CHEBI:37563"/>
        <note>allosteric inhibitor</note>
    </ligand>
</feature>
<feature type="binding site" evidence="1">
    <location>
        <position position="222"/>
    </location>
    <ligand>
        <name>UTP</name>
        <dbReference type="ChEBI" id="CHEBI:46398"/>
    </ligand>
</feature>
<feature type="binding site" evidence="1">
    <location>
        <position position="351"/>
    </location>
    <ligand>
        <name>L-glutamine</name>
        <dbReference type="ChEBI" id="CHEBI:58359"/>
    </ligand>
</feature>
<feature type="binding site" evidence="1">
    <location>
        <begin position="379"/>
        <end position="382"/>
    </location>
    <ligand>
        <name>L-glutamine</name>
        <dbReference type="ChEBI" id="CHEBI:58359"/>
    </ligand>
</feature>
<feature type="binding site" evidence="1">
    <location>
        <position position="402"/>
    </location>
    <ligand>
        <name>L-glutamine</name>
        <dbReference type="ChEBI" id="CHEBI:58359"/>
    </ligand>
</feature>
<feature type="binding site" evidence="1">
    <location>
        <position position="469"/>
    </location>
    <ligand>
        <name>L-glutamine</name>
        <dbReference type="ChEBI" id="CHEBI:58359"/>
    </ligand>
</feature>
<sequence length="548" mass="60663">MTRYIFVTGGVVSSLGKGIASASLAAILEARGLKVTILKLDPYINVDPGTMSPFQHGEVFVTEDGAETDLDLGHYERFIRTKMTQGNNFTTGRVYEHVLRKERRGDYLGGTVQVIPHITDEIKRRVYEGGDGFDVALVEIGGTVGDIESLPFLEATRQIRSEKGANQAIFMHLTLVPYIKTAGETKTKPTQHSVKELRSIGIQPDILICRSEVELEESERRKIALFTNVEERAVVPLQDADTIYRIPLMLHEHGLDDIICDKLRIEADEVDLAEWVRVLDAKLNPLKSVNIAMVGKYMELLDAYKSLNEALIHAGIQGRVKVNIDYIDSEDIEHHGTERLAGKDAILVPGGFGERGVEGKIATARYARENGVPYLGICLGMQVAVIEYARHVAGWADANSTEFTHDTQHPVVGLITEWVNAEGKIELRDAASDLGGTMRLGGQVCHLKPGTRAHEAYGLDEITERHRHRFEVNNQFVEALESAGLVISGKSADHSLVEMIELPEHPWYVACQFHPEFTSTPRDGHPLFSGFVNAALAYKAARARAQQS</sequence>